<proteinExistence type="inferred from homology"/>
<protein>
    <recommendedName>
        <fullName evidence="1">UDP-N-acetylenolpyruvoylglucosamine reductase</fullName>
        <ecNumber evidence="1">1.3.1.98</ecNumber>
    </recommendedName>
    <alternativeName>
        <fullName evidence="1">UDP-N-acetylmuramate dehydrogenase</fullName>
    </alternativeName>
</protein>
<feature type="chain" id="PRO_1000191427" description="UDP-N-acetylenolpyruvoylglucosamine reductase">
    <location>
        <begin position="1"/>
        <end position="298"/>
    </location>
</feature>
<feature type="domain" description="FAD-binding PCMH-type" evidence="1">
    <location>
        <begin position="26"/>
        <end position="191"/>
    </location>
</feature>
<feature type="active site" evidence="1">
    <location>
        <position position="170"/>
    </location>
</feature>
<feature type="active site" description="Proton donor" evidence="1">
    <location>
        <position position="220"/>
    </location>
</feature>
<feature type="active site" evidence="1">
    <location>
        <position position="290"/>
    </location>
</feature>
<comment type="function">
    <text evidence="1">Cell wall formation.</text>
</comment>
<comment type="catalytic activity">
    <reaction evidence="1">
        <text>UDP-N-acetyl-alpha-D-muramate + NADP(+) = UDP-N-acetyl-3-O-(1-carboxyvinyl)-alpha-D-glucosamine + NADPH + H(+)</text>
        <dbReference type="Rhea" id="RHEA:12248"/>
        <dbReference type="ChEBI" id="CHEBI:15378"/>
        <dbReference type="ChEBI" id="CHEBI:57783"/>
        <dbReference type="ChEBI" id="CHEBI:58349"/>
        <dbReference type="ChEBI" id="CHEBI:68483"/>
        <dbReference type="ChEBI" id="CHEBI:70757"/>
        <dbReference type="EC" id="1.3.1.98"/>
    </reaction>
</comment>
<comment type="cofactor">
    <cofactor evidence="1">
        <name>FAD</name>
        <dbReference type="ChEBI" id="CHEBI:57692"/>
    </cofactor>
</comment>
<comment type="pathway">
    <text evidence="1">Cell wall biogenesis; peptidoglycan biosynthesis.</text>
</comment>
<comment type="subcellular location">
    <subcellularLocation>
        <location evidence="1">Cytoplasm</location>
    </subcellularLocation>
</comment>
<comment type="similarity">
    <text evidence="1">Belongs to the MurB family.</text>
</comment>
<dbReference type="EC" id="1.3.1.98" evidence="1"/>
<dbReference type="EMBL" id="AP007281">
    <property type="protein sequence ID" value="BAG24914.1"/>
    <property type="molecule type" value="Genomic_DNA"/>
</dbReference>
<dbReference type="RefSeq" id="WP_003667490.1">
    <property type="nucleotide sequence ID" value="NC_010609.1"/>
</dbReference>
<dbReference type="SMR" id="B2G632"/>
<dbReference type="KEGG" id="lrf:LAR_0398"/>
<dbReference type="HOGENOM" id="CLU_035304_1_1_9"/>
<dbReference type="UniPathway" id="UPA00219"/>
<dbReference type="GO" id="GO:0005829">
    <property type="term" value="C:cytosol"/>
    <property type="evidence" value="ECO:0007669"/>
    <property type="project" value="TreeGrafter"/>
</dbReference>
<dbReference type="GO" id="GO:0071949">
    <property type="term" value="F:FAD binding"/>
    <property type="evidence" value="ECO:0007669"/>
    <property type="project" value="InterPro"/>
</dbReference>
<dbReference type="GO" id="GO:0008762">
    <property type="term" value="F:UDP-N-acetylmuramate dehydrogenase activity"/>
    <property type="evidence" value="ECO:0007669"/>
    <property type="project" value="UniProtKB-UniRule"/>
</dbReference>
<dbReference type="GO" id="GO:0051301">
    <property type="term" value="P:cell division"/>
    <property type="evidence" value="ECO:0007669"/>
    <property type="project" value="UniProtKB-KW"/>
</dbReference>
<dbReference type="GO" id="GO:0071555">
    <property type="term" value="P:cell wall organization"/>
    <property type="evidence" value="ECO:0007669"/>
    <property type="project" value="UniProtKB-KW"/>
</dbReference>
<dbReference type="GO" id="GO:0009252">
    <property type="term" value="P:peptidoglycan biosynthetic process"/>
    <property type="evidence" value="ECO:0007669"/>
    <property type="project" value="UniProtKB-UniRule"/>
</dbReference>
<dbReference type="GO" id="GO:0008360">
    <property type="term" value="P:regulation of cell shape"/>
    <property type="evidence" value="ECO:0007669"/>
    <property type="project" value="UniProtKB-KW"/>
</dbReference>
<dbReference type="Gene3D" id="3.30.465.10">
    <property type="match status" value="1"/>
</dbReference>
<dbReference type="Gene3D" id="3.90.78.10">
    <property type="entry name" value="UDP-N-acetylenolpyruvoylglucosamine reductase, C-terminal domain"/>
    <property type="match status" value="1"/>
</dbReference>
<dbReference type="Gene3D" id="3.30.43.10">
    <property type="entry name" value="Uridine Diphospho-n-acetylenolpyruvylglucosamine Reductase, domain 2"/>
    <property type="match status" value="1"/>
</dbReference>
<dbReference type="HAMAP" id="MF_00037">
    <property type="entry name" value="MurB"/>
    <property type="match status" value="1"/>
</dbReference>
<dbReference type="InterPro" id="IPR016166">
    <property type="entry name" value="FAD-bd_PCMH"/>
</dbReference>
<dbReference type="InterPro" id="IPR036318">
    <property type="entry name" value="FAD-bd_PCMH-like_sf"/>
</dbReference>
<dbReference type="InterPro" id="IPR016167">
    <property type="entry name" value="FAD-bd_PCMH_sub1"/>
</dbReference>
<dbReference type="InterPro" id="IPR016169">
    <property type="entry name" value="FAD-bd_PCMH_sub2"/>
</dbReference>
<dbReference type="InterPro" id="IPR003170">
    <property type="entry name" value="MurB"/>
</dbReference>
<dbReference type="InterPro" id="IPR011601">
    <property type="entry name" value="MurB_C"/>
</dbReference>
<dbReference type="InterPro" id="IPR036635">
    <property type="entry name" value="MurB_C_sf"/>
</dbReference>
<dbReference type="InterPro" id="IPR006094">
    <property type="entry name" value="Oxid_FAD_bind_N"/>
</dbReference>
<dbReference type="NCBIfam" id="TIGR00179">
    <property type="entry name" value="murB"/>
    <property type="match status" value="1"/>
</dbReference>
<dbReference type="NCBIfam" id="NF010480">
    <property type="entry name" value="PRK13905.1"/>
    <property type="match status" value="1"/>
</dbReference>
<dbReference type="PANTHER" id="PTHR21071">
    <property type="entry name" value="UDP-N-ACETYLENOLPYRUVOYLGLUCOSAMINE REDUCTASE"/>
    <property type="match status" value="1"/>
</dbReference>
<dbReference type="PANTHER" id="PTHR21071:SF4">
    <property type="entry name" value="UDP-N-ACETYLENOLPYRUVOYLGLUCOSAMINE REDUCTASE"/>
    <property type="match status" value="1"/>
</dbReference>
<dbReference type="Pfam" id="PF01565">
    <property type="entry name" value="FAD_binding_4"/>
    <property type="match status" value="1"/>
</dbReference>
<dbReference type="Pfam" id="PF02873">
    <property type="entry name" value="MurB_C"/>
    <property type="match status" value="1"/>
</dbReference>
<dbReference type="SUPFAM" id="SSF56176">
    <property type="entry name" value="FAD-binding/transporter-associated domain-like"/>
    <property type="match status" value="1"/>
</dbReference>
<dbReference type="SUPFAM" id="SSF56194">
    <property type="entry name" value="Uridine diphospho-N-Acetylenolpyruvylglucosamine reductase, MurB, C-terminal domain"/>
    <property type="match status" value="1"/>
</dbReference>
<dbReference type="PROSITE" id="PS51387">
    <property type="entry name" value="FAD_PCMH"/>
    <property type="match status" value="1"/>
</dbReference>
<sequence>MANLMNEFPDIEIKQDEPLMNYTYTKTGGPADWLAFPETIDQVKELVDYVREHEMGLTVLGNASNLIVGDGGIDDLTIILTRLNKIEVHDNKVTAQAGASYIATTEAARDSELTGLEFAAGIPGSIGGAVFMNAGAYGGETKNVVSEATVMLPDGTIKHLTNEELDFGYRHSSIQDNNGVVLDATFALEPGKYDEIKARMDDLNERREAKQPLDLPSCGSVFKRPEGYYAGKLIHDAGLQGYTSGGAQVSTKHAGFIVNIDHGTAADYVNVIHHVQKTVKEKFGVDLETEVRIIGRQD</sequence>
<evidence type="ECO:0000255" key="1">
    <source>
        <dbReference type="HAMAP-Rule" id="MF_00037"/>
    </source>
</evidence>
<keyword id="KW-0131">Cell cycle</keyword>
<keyword id="KW-0132">Cell division</keyword>
<keyword id="KW-0133">Cell shape</keyword>
<keyword id="KW-0961">Cell wall biogenesis/degradation</keyword>
<keyword id="KW-0963">Cytoplasm</keyword>
<keyword id="KW-0274">FAD</keyword>
<keyword id="KW-0285">Flavoprotein</keyword>
<keyword id="KW-0521">NADP</keyword>
<keyword id="KW-0560">Oxidoreductase</keyword>
<keyword id="KW-0573">Peptidoglycan synthesis</keyword>
<accession>B2G632</accession>
<gene>
    <name evidence="1" type="primary">murB</name>
    <name type="ordered locus">LAR_0398</name>
</gene>
<organism>
    <name type="scientific">Limosilactobacillus reuteri subsp. reuteri (strain JCM 1112)</name>
    <name type="common">Lactobacillus reuteri</name>
    <dbReference type="NCBI Taxonomy" id="557433"/>
    <lineage>
        <taxon>Bacteria</taxon>
        <taxon>Bacillati</taxon>
        <taxon>Bacillota</taxon>
        <taxon>Bacilli</taxon>
        <taxon>Lactobacillales</taxon>
        <taxon>Lactobacillaceae</taxon>
        <taxon>Limosilactobacillus</taxon>
    </lineage>
</organism>
<reference key="1">
    <citation type="journal article" date="2008" name="DNA Res.">
        <title>Comparative genome analysis of Lactobacillus reuteri and Lactobacillus fermentum reveal a genomic island for reuterin and cobalamin production.</title>
        <authorList>
            <person name="Morita H."/>
            <person name="Toh H."/>
            <person name="Fukuda S."/>
            <person name="Horikawa H."/>
            <person name="Oshima K."/>
            <person name="Suzuki T."/>
            <person name="Murakami M."/>
            <person name="Hisamatsu S."/>
            <person name="Kato Y."/>
            <person name="Takizawa T."/>
            <person name="Fukuoka H."/>
            <person name="Yoshimura T."/>
            <person name="Itoh K."/>
            <person name="O'Sullivan D.J."/>
            <person name="McKay L.L."/>
            <person name="Ohno H."/>
            <person name="Kikuchi J."/>
            <person name="Masaoka T."/>
            <person name="Hattori M."/>
        </authorList>
    </citation>
    <scope>NUCLEOTIDE SEQUENCE [LARGE SCALE GENOMIC DNA]</scope>
    <source>
        <strain>JCM 1112</strain>
    </source>
</reference>
<name>MURB_LIMRJ</name>